<proteinExistence type="evidence at protein level"/>
<protein>
    <recommendedName>
        <fullName evidence="1">Large ribosomal subunit protein uL29</fullName>
    </recommendedName>
    <alternativeName>
        <fullName evidence="3">50S ribosomal protein L29</fullName>
    </alternativeName>
</protein>
<keyword id="KW-0002">3D-structure</keyword>
<keyword id="KW-1185">Reference proteome</keyword>
<keyword id="KW-0687">Ribonucleoprotein</keyword>
<keyword id="KW-0689">Ribosomal protein</keyword>
<gene>
    <name evidence="1" type="primary">rpl29</name>
    <name type="ordered locus">TK1535</name>
</gene>
<comment type="subunit">
    <text evidence="2">Part of the 50S ribosomal subunit.</text>
</comment>
<comment type="similarity">
    <text evidence="1">Belongs to the universal ribosomal protein uL29 family.</text>
</comment>
<sequence length="66" mass="7919">MKPSEIREMSIEEIDKKIRELRLELAKERGVLTMGASMENPMVIRNLRRDIARLLTIKREKLREKR</sequence>
<name>RL29_THEKO</name>
<organism>
    <name type="scientific">Thermococcus kodakarensis (strain ATCC BAA-918 / JCM 12380 / KOD1)</name>
    <name type="common">Pyrococcus kodakaraensis (strain KOD1)</name>
    <dbReference type="NCBI Taxonomy" id="69014"/>
    <lineage>
        <taxon>Archaea</taxon>
        <taxon>Methanobacteriati</taxon>
        <taxon>Methanobacteriota</taxon>
        <taxon>Thermococci</taxon>
        <taxon>Thermococcales</taxon>
        <taxon>Thermococcaceae</taxon>
        <taxon>Thermococcus</taxon>
    </lineage>
</organism>
<feature type="chain" id="PRO_0000130522" description="Large ribosomal subunit protein uL29">
    <location>
        <begin position="1"/>
        <end position="66"/>
    </location>
</feature>
<reference key="1">
    <citation type="journal article" date="2005" name="Genome Res.">
        <title>Complete genome sequence of the hyperthermophilic archaeon Thermococcus kodakaraensis KOD1 and comparison with Pyrococcus genomes.</title>
        <authorList>
            <person name="Fukui T."/>
            <person name="Atomi H."/>
            <person name="Kanai T."/>
            <person name="Matsumi R."/>
            <person name="Fujiwara S."/>
            <person name="Imanaka T."/>
        </authorList>
    </citation>
    <scope>NUCLEOTIDE SEQUENCE [LARGE SCALE GENOMIC DNA]</scope>
    <source>
        <strain>ATCC BAA-918 / JCM 12380 / KOD1</strain>
    </source>
</reference>
<reference evidence="4 5 6" key="2">
    <citation type="journal article" date="2020" name="Nature">
        <title>Dynamic RNA acetylation revealed by quantitative cross-evolutionary mapping.</title>
        <authorList>
            <person name="Sas-Chen A."/>
            <person name="Thomas J.M."/>
            <person name="Matzov D."/>
            <person name="Taoka M."/>
            <person name="Nance K.D."/>
            <person name="Nir R."/>
            <person name="Bryson K.M."/>
            <person name="Shachar R."/>
            <person name="Liman G.L.S."/>
            <person name="Burkhart B.W."/>
            <person name="Gamage S.T."/>
            <person name="Nobe Y."/>
            <person name="Briney C.A."/>
            <person name="Levy M.J."/>
            <person name="Fuchs R.T."/>
            <person name="Robb G.B."/>
            <person name="Hartmann J."/>
            <person name="Sharma S."/>
            <person name="Lin Q."/>
            <person name="Florens L."/>
            <person name="Washburn M.P."/>
            <person name="Isobe T."/>
            <person name="Santangelo T.J."/>
            <person name="Shalev-Benami M."/>
            <person name="Meier J.L."/>
            <person name="Schwartz S."/>
        </authorList>
    </citation>
    <scope>STRUCTURE BY ELECTRON MICROSCOPY (2.55 ANGSTROMS) IN 70S RIBOSOME</scope>
    <scope>SUBUNIT</scope>
    <source>
        <strain>ATCC BAA-918 / TS559</strain>
    </source>
</reference>
<dbReference type="EMBL" id="AP006878">
    <property type="protein sequence ID" value="BAD85724.1"/>
    <property type="molecule type" value="Genomic_DNA"/>
</dbReference>
<dbReference type="RefSeq" id="WP_011250486.1">
    <property type="nucleotide sequence ID" value="NC_006624.1"/>
</dbReference>
<dbReference type="PDB" id="6SKF">
    <property type="method" value="EM"/>
    <property type="resolution" value="2.95 A"/>
    <property type="chains" value="BZ=1-66"/>
</dbReference>
<dbReference type="PDB" id="6SKG">
    <property type="method" value="EM"/>
    <property type="resolution" value="2.65 A"/>
    <property type="chains" value="BZ=1-66"/>
</dbReference>
<dbReference type="PDB" id="6TH6">
    <property type="method" value="EM"/>
    <property type="resolution" value="2.55 A"/>
    <property type="chains" value="BZ=1-66"/>
</dbReference>
<dbReference type="PDBsum" id="6SKF"/>
<dbReference type="PDBsum" id="6SKG"/>
<dbReference type="PDBsum" id="6TH6"/>
<dbReference type="EMDB" id="EMD-10223"/>
<dbReference type="EMDB" id="EMD-10224"/>
<dbReference type="EMDB" id="EMD-10503"/>
<dbReference type="SMR" id="Q5JDH6"/>
<dbReference type="FunCoup" id="Q5JDH6">
    <property type="interactions" value="127"/>
</dbReference>
<dbReference type="STRING" id="69014.TK1535"/>
<dbReference type="EnsemblBacteria" id="BAD85724">
    <property type="protein sequence ID" value="BAD85724"/>
    <property type="gene ID" value="TK1535"/>
</dbReference>
<dbReference type="GeneID" id="78448063"/>
<dbReference type="KEGG" id="tko:TK1535"/>
<dbReference type="PATRIC" id="fig|69014.16.peg.1495"/>
<dbReference type="eggNOG" id="arCOG00785">
    <property type="taxonomic scope" value="Archaea"/>
</dbReference>
<dbReference type="HOGENOM" id="CLU_158491_2_2_2"/>
<dbReference type="InParanoid" id="Q5JDH6"/>
<dbReference type="OrthoDB" id="11736at2157"/>
<dbReference type="PhylomeDB" id="Q5JDH6"/>
<dbReference type="Proteomes" id="UP000000536">
    <property type="component" value="Chromosome"/>
</dbReference>
<dbReference type="GO" id="GO:1990904">
    <property type="term" value="C:ribonucleoprotein complex"/>
    <property type="evidence" value="ECO:0007669"/>
    <property type="project" value="UniProtKB-KW"/>
</dbReference>
<dbReference type="GO" id="GO:0005840">
    <property type="term" value="C:ribosome"/>
    <property type="evidence" value="ECO:0007669"/>
    <property type="project" value="UniProtKB-KW"/>
</dbReference>
<dbReference type="GO" id="GO:0003735">
    <property type="term" value="F:structural constituent of ribosome"/>
    <property type="evidence" value="ECO:0007669"/>
    <property type="project" value="InterPro"/>
</dbReference>
<dbReference type="GO" id="GO:0006412">
    <property type="term" value="P:translation"/>
    <property type="evidence" value="ECO:0007669"/>
    <property type="project" value="UniProtKB-UniRule"/>
</dbReference>
<dbReference type="CDD" id="cd00427">
    <property type="entry name" value="Ribosomal_L29_HIP"/>
    <property type="match status" value="1"/>
</dbReference>
<dbReference type="Gene3D" id="1.10.287.310">
    <property type="match status" value="1"/>
</dbReference>
<dbReference type="HAMAP" id="MF_00374">
    <property type="entry name" value="Ribosomal_uL29"/>
    <property type="match status" value="1"/>
</dbReference>
<dbReference type="InterPro" id="IPR001854">
    <property type="entry name" value="Ribosomal_uL29"/>
</dbReference>
<dbReference type="InterPro" id="IPR018254">
    <property type="entry name" value="Ribosomal_uL29_CS"/>
</dbReference>
<dbReference type="InterPro" id="IPR036049">
    <property type="entry name" value="Ribosomal_uL29_sf"/>
</dbReference>
<dbReference type="NCBIfam" id="TIGR00012">
    <property type="entry name" value="L29"/>
    <property type="match status" value="1"/>
</dbReference>
<dbReference type="Pfam" id="PF00831">
    <property type="entry name" value="Ribosomal_L29"/>
    <property type="match status" value="1"/>
</dbReference>
<dbReference type="SUPFAM" id="SSF46561">
    <property type="entry name" value="Ribosomal protein L29 (L29p)"/>
    <property type="match status" value="1"/>
</dbReference>
<dbReference type="PROSITE" id="PS00579">
    <property type="entry name" value="RIBOSOMAL_L29"/>
    <property type="match status" value="1"/>
</dbReference>
<accession>Q5JDH6</accession>
<evidence type="ECO:0000255" key="1">
    <source>
        <dbReference type="HAMAP-Rule" id="MF_00374"/>
    </source>
</evidence>
<evidence type="ECO:0000269" key="2">
    <source>
    </source>
</evidence>
<evidence type="ECO:0000305" key="3"/>
<evidence type="ECO:0007744" key="4">
    <source>
        <dbReference type="PDB" id="6SKF"/>
    </source>
</evidence>
<evidence type="ECO:0007744" key="5">
    <source>
        <dbReference type="PDB" id="6SKG"/>
    </source>
</evidence>
<evidence type="ECO:0007744" key="6">
    <source>
        <dbReference type="PDB" id="6TH6"/>
    </source>
</evidence>